<comment type="function">
    <text evidence="1">Heme chaperone required for the biogenesis of c-type cytochromes. Transiently binds heme delivered by CcmC and transfers the heme to apo-cytochromes in a process facilitated by CcmF and CcmH.</text>
</comment>
<comment type="subcellular location">
    <subcellularLocation>
        <location evidence="1">Cell inner membrane</location>
        <topology evidence="1">Single-pass type II membrane protein</topology>
        <orientation evidence="1">Periplasmic side</orientation>
    </subcellularLocation>
</comment>
<comment type="similarity">
    <text evidence="1">Belongs to the CcmE/CycJ family.</text>
</comment>
<sequence>MNPRRKSRLYLAMVVLIGISLTTTLVLYALRSNIDLFYTPGEILQGKGERHEKPAIGQRLRIGGMVMPGSVQRDAKTLEMSFQVYDARGAVTVTYTGILPDLFREGQGVVAQGVFAEGNTVHAKEVLAKHDEKYTPPEVEEAMKENHSRPAAAYRGTNTTGNAL</sequence>
<organism>
    <name type="scientific">Yersinia pseudotuberculosis serotype O:1b (strain IP 31758)</name>
    <dbReference type="NCBI Taxonomy" id="349747"/>
    <lineage>
        <taxon>Bacteria</taxon>
        <taxon>Pseudomonadati</taxon>
        <taxon>Pseudomonadota</taxon>
        <taxon>Gammaproteobacteria</taxon>
        <taxon>Enterobacterales</taxon>
        <taxon>Yersiniaceae</taxon>
        <taxon>Yersinia</taxon>
    </lineage>
</organism>
<feature type="chain" id="PRO_1000070869" description="Cytochrome c-type biogenesis protein CcmE">
    <location>
        <begin position="1"/>
        <end position="164"/>
    </location>
</feature>
<feature type="topological domain" description="Cytoplasmic" evidence="1">
    <location>
        <begin position="1"/>
        <end position="8"/>
    </location>
</feature>
<feature type="transmembrane region" description="Helical; Signal-anchor for type II membrane protein" evidence="1">
    <location>
        <begin position="9"/>
        <end position="29"/>
    </location>
</feature>
<feature type="topological domain" description="Periplasmic" evidence="1">
    <location>
        <begin position="30"/>
        <end position="164"/>
    </location>
</feature>
<feature type="region of interest" description="Disordered" evidence="2">
    <location>
        <begin position="140"/>
        <end position="164"/>
    </location>
</feature>
<feature type="binding site" description="covalent" evidence="1">
    <location>
        <position position="130"/>
    </location>
    <ligand>
        <name>heme</name>
        <dbReference type="ChEBI" id="CHEBI:30413"/>
    </ligand>
</feature>
<feature type="binding site" description="axial binding residue" evidence="1">
    <location>
        <position position="134"/>
    </location>
    <ligand>
        <name>heme</name>
        <dbReference type="ChEBI" id="CHEBI:30413"/>
    </ligand>
    <ligandPart>
        <name>Fe</name>
        <dbReference type="ChEBI" id="CHEBI:18248"/>
    </ligandPart>
</feature>
<proteinExistence type="inferred from homology"/>
<evidence type="ECO:0000255" key="1">
    <source>
        <dbReference type="HAMAP-Rule" id="MF_01959"/>
    </source>
</evidence>
<evidence type="ECO:0000256" key="2">
    <source>
        <dbReference type="SAM" id="MobiDB-lite"/>
    </source>
</evidence>
<protein>
    <recommendedName>
        <fullName evidence="1">Cytochrome c-type biogenesis protein CcmE</fullName>
    </recommendedName>
    <alternativeName>
        <fullName evidence="1">Cytochrome c maturation protein E</fullName>
    </alternativeName>
    <alternativeName>
        <fullName evidence="1">Heme chaperone CcmE</fullName>
    </alternativeName>
</protein>
<accession>A7FGJ2</accession>
<reference key="1">
    <citation type="journal article" date="2007" name="PLoS Genet.">
        <title>The complete genome sequence of Yersinia pseudotuberculosis IP31758, the causative agent of Far East scarlet-like fever.</title>
        <authorList>
            <person name="Eppinger M."/>
            <person name="Rosovitz M.J."/>
            <person name="Fricke W.F."/>
            <person name="Rasko D.A."/>
            <person name="Kokorina G."/>
            <person name="Fayolle C."/>
            <person name="Lindler L.E."/>
            <person name="Carniel E."/>
            <person name="Ravel J."/>
        </authorList>
    </citation>
    <scope>NUCLEOTIDE SEQUENCE [LARGE SCALE GENOMIC DNA]</scope>
    <source>
        <strain>IP 31758</strain>
    </source>
</reference>
<gene>
    <name evidence="1" type="primary">ccmE</name>
    <name evidence="1" type="synonym">cycJ</name>
    <name type="ordered locus">YpsIP31758_1391</name>
</gene>
<name>CCME_YERP3</name>
<dbReference type="EMBL" id="CP000720">
    <property type="protein sequence ID" value="ABS47541.1"/>
    <property type="molecule type" value="Genomic_DNA"/>
</dbReference>
<dbReference type="RefSeq" id="WP_002209697.1">
    <property type="nucleotide sequence ID" value="NC_009708.1"/>
</dbReference>
<dbReference type="SMR" id="A7FGJ2"/>
<dbReference type="GeneID" id="57975951"/>
<dbReference type="KEGG" id="ypi:YpsIP31758_1391"/>
<dbReference type="HOGENOM" id="CLU_079503_1_0_6"/>
<dbReference type="Proteomes" id="UP000002412">
    <property type="component" value="Chromosome"/>
</dbReference>
<dbReference type="GO" id="GO:0005886">
    <property type="term" value="C:plasma membrane"/>
    <property type="evidence" value="ECO:0007669"/>
    <property type="project" value="UniProtKB-SubCell"/>
</dbReference>
<dbReference type="GO" id="GO:0020037">
    <property type="term" value="F:heme binding"/>
    <property type="evidence" value="ECO:0007669"/>
    <property type="project" value="InterPro"/>
</dbReference>
<dbReference type="GO" id="GO:0046872">
    <property type="term" value="F:metal ion binding"/>
    <property type="evidence" value="ECO:0007669"/>
    <property type="project" value="UniProtKB-KW"/>
</dbReference>
<dbReference type="GO" id="GO:0017004">
    <property type="term" value="P:cytochrome complex assembly"/>
    <property type="evidence" value="ECO:0007669"/>
    <property type="project" value="UniProtKB-KW"/>
</dbReference>
<dbReference type="FunFam" id="2.40.50.140:FF:000104">
    <property type="entry name" value="Cytochrome c-type biogenesis protein CcmE"/>
    <property type="match status" value="1"/>
</dbReference>
<dbReference type="Gene3D" id="2.40.50.140">
    <property type="entry name" value="Nucleic acid-binding proteins"/>
    <property type="match status" value="1"/>
</dbReference>
<dbReference type="HAMAP" id="MF_01959">
    <property type="entry name" value="CcmE"/>
    <property type="match status" value="1"/>
</dbReference>
<dbReference type="InterPro" id="IPR004329">
    <property type="entry name" value="CcmE"/>
</dbReference>
<dbReference type="InterPro" id="IPR036127">
    <property type="entry name" value="CcmE-like_sf"/>
</dbReference>
<dbReference type="InterPro" id="IPR012340">
    <property type="entry name" value="NA-bd_OB-fold"/>
</dbReference>
<dbReference type="NCBIfam" id="NF009635">
    <property type="entry name" value="PRK13150.1"/>
    <property type="match status" value="1"/>
</dbReference>
<dbReference type="NCBIfam" id="NF009638">
    <property type="entry name" value="PRK13165.1"/>
    <property type="match status" value="1"/>
</dbReference>
<dbReference type="NCBIfam" id="NF009727">
    <property type="entry name" value="PRK13254.1-1"/>
    <property type="match status" value="1"/>
</dbReference>
<dbReference type="NCBIfam" id="NF009729">
    <property type="entry name" value="PRK13254.1-3"/>
    <property type="match status" value="1"/>
</dbReference>
<dbReference type="NCBIfam" id="NF009731">
    <property type="entry name" value="PRK13254.1-5"/>
    <property type="match status" value="1"/>
</dbReference>
<dbReference type="PANTHER" id="PTHR34128">
    <property type="entry name" value="CYTOCHROME C-TYPE BIOGENESIS PROTEIN CCME HOMOLOG, MITOCHONDRIAL"/>
    <property type="match status" value="1"/>
</dbReference>
<dbReference type="PANTHER" id="PTHR34128:SF2">
    <property type="entry name" value="CYTOCHROME C-TYPE BIOGENESIS PROTEIN CCME HOMOLOG, MITOCHONDRIAL"/>
    <property type="match status" value="1"/>
</dbReference>
<dbReference type="Pfam" id="PF03100">
    <property type="entry name" value="CcmE"/>
    <property type="match status" value="1"/>
</dbReference>
<dbReference type="SUPFAM" id="SSF82093">
    <property type="entry name" value="Heme chaperone CcmE"/>
    <property type="match status" value="1"/>
</dbReference>
<keyword id="KW-0997">Cell inner membrane</keyword>
<keyword id="KW-1003">Cell membrane</keyword>
<keyword id="KW-0201">Cytochrome c-type biogenesis</keyword>
<keyword id="KW-0349">Heme</keyword>
<keyword id="KW-0408">Iron</keyword>
<keyword id="KW-0472">Membrane</keyword>
<keyword id="KW-0479">Metal-binding</keyword>
<keyword id="KW-0735">Signal-anchor</keyword>
<keyword id="KW-0812">Transmembrane</keyword>
<keyword id="KW-1133">Transmembrane helix</keyword>